<comment type="sequence caution" evidence="2">
    <conflict type="erroneous gene model prediction">
        <sequence resource="EMBL-CDS" id="CAB86926"/>
    </conflict>
    <text>The predicted gene At3g58980 has been split into 2 genes: At3g58975 and At3g58980.</text>
</comment>
<dbReference type="EMBL" id="AL163527">
    <property type="protein sequence ID" value="CAB86926.1"/>
    <property type="status" value="ALT_SEQ"/>
    <property type="molecule type" value="Genomic_DNA"/>
</dbReference>
<dbReference type="EMBL" id="CP002686">
    <property type="protein sequence ID" value="AEE79856.1"/>
    <property type="molecule type" value="Genomic_DNA"/>
</dbReference>
<dbReference type="EMBL" id="AK319173">
    <property type="protein sequence ID" value="BAH57288.1"/>
    <property type="molecule type" value="mRNA"/>
</dbReference>
<dbReference type="PIR" id="T47780">
    <property type="entry name" value="T47780"/>
</dbReference>
<dbReference type="RefSeq" id="NP_191457.2">
    <property type="nucleotide sequence ID" value="NM_115760.2"/>
</dbReference>
<dbReference type="FunCoup" id="P0C2G1">
    <property type="interactions" value="1"/>
</dbReference>
<dbReference type="PaxDb" id="3702-AT3G58980.1"/>
<dbReference type="ProteomicsDB" id="222505"/>
<dbReference type="EnsemblPlants" id="AT3G58980.1">
    <property type="protein sequence ID" value="AT3G58980.1"/>
    <property type="gene ID" value="AT3G58980"/>
</dbReference>
<dbReference type="GeneID" id="825067"/>
<dbReference type="Gramene" id="AT3G58980.1">
    <property type="protein sequence ID" value="AT3G58980.1"/>
    <property type="gene ID" value="AT3G58980"/>
</dbReference>
<dbReference type="KEGG" id="ath:AT3G58980"/>
<dbReference type="Araport" id="AT3G58980"/>
<dbReference type="TAIR" id="AT3G58980"/>
<dbReference type="HOGENOM" id="CLU_010721_7_1_1"/>
<dbReference type="InParanoid" id="P0C2G1"/>
<dbReference type="OMA" id="IICHIAS"/>
<dbReference type="PhylomeDB" id="P0C2G1"/>
<dbReference type="PRO" id="PR:P0C2G1"/>
<dbReference type="Proteomes" id="UP000006548">
    <property type="component" value="Chromosome 3"/>
</dbReference>
<dbReference type="ExpressionAtlas" id="P0C2G1">
    <property type="expression patterns" value="baseline and differential"/>
</dbReference>
<dbReference type="CDD" id="cd22160">
    <property type="entry name" value="F-box_AtFBL13-like"/>
    <property type="match status" value="1"/>
</dbReference>
<dbReference type="Gene3D" id="1.20.1280.50">
    <property type="match status" value="1"/>
</dbReference>
<dbReference type="Gene3D" id="3.80.10.10">
    <property type="entry name" value="Ribonuclease Inhibitor"/>
    <property type="match status" value="1"/>
</dbReference>
<dbReference type="InterPro" id="IPR036047">
    <property type="entry name" value="F-box-like_dom_sf"/>
</dbReference>
<dbReference type="InterPro" id="IPR053781">
    <property type="entry name" value="F-box_AtFBL13-like"/>
</dbReference>
<dbReference type="InterPro" id="IPR001810">
    <property type="entry name" value="F-box_dom"/>
</dbReference>
<dbReference type="InterPro" id="IPR006566">
    <property type="entry name" value="FBD"/>
</dbReference>
<dbReference type="InterPro" id="IPR055294">
    <property type="entry name" value="FBL60-like"/>
</dbReference>
<dbReference type="InterPro" id="IPR032675">
    <property type="entry name" value="LRR_dom_sf"/>
</dbReference>
<dbReference type="InterPro" id="IPR055411">
    <property type="entry name" value="LRR_FXL15/At3g58940/PEG3-like"/>
</dbReference>
<dbReference type="InterPro" id="IPR013101">
    <property type="entry name" value="LRR_PRU1-like"/>
</dbReference>
<dbReference type="PANTHER" id="PTHR31293">
    <property type="entry name" value="RNI-LIKE SUPERFAMILY PROTEIN"/>
    <property type="match status" value="1"/>
</dbReference>
<dbReference type="PANTHER" id="PTHR31293:SF12">
    <property type="entry name" value="RNI-LIKE SUPERFAMILY PROTEIN"/>
    <property type="match status" value="1"/>
</dbReference>
<dbReference type="Pfam" id="PF00646">
    <property type="entry name" value="F-box"/>
    <property type="match status" value="1"/>
</dbReference>
<dbReference type="Pfam" id="PF07723">
    <property type="entry name" value="LRR_2"/>
    <property type="match status" value="1"/>
</dbReference>
<dbReference type="Pfam" id="PF24758">
    <property type="entry name" value="LRR_At5g56370"/>
    <property type="match status" value="1"/>
</dbReference>
<dbReference type="SMART" id="SM00579">
    <property type="entry name" value="FBD"/>
    <property type="match status" value="1"/>
</dbReference>
<dbReference type="SUPFAM" id="SSF81383">
    <property type="entry name" value="F-box domain"/>
    <property type="match status" value="1"/>
</dbReference>
<dbReference type="SUPFAM" id="SSF52047">
    <property type="entry name" value="RNI-like"/>
    <property type="match status" value="1"/>
</dbReference>
<dbReference type="PROSITE" id="PS50181">
    <property type="entry name" value="FBOX"/>
    <property type="match status" value="1"/>
</dbReference>
<gene>
    <name type="ordered locus">At3g58980</name>
    <name type="ORF">F17J16.30</name>
</gene>
<keyword id="KW-0433">Leucine-rich repeat</keyword>
<keyword id="KW-1185">Reference proteome</keyword>
<keyword id="KW-0677">Repeat</keyword>
<accession>P0C2G1</accession>
<accession>C0Z3K9</accession>
<accession>Q9LYT8</accession>
<reference key="1">
    <citation type="journal article" date="2000" name="Nature">
        <title>Sequence and analysis of chromosome 3 of the plant Arabidopsis thaliana.</title>
        <authorList>
            <person name="Salanoubat M."/>
            <person name="Lemcke K."/>
            <person name="Rieger M."/>
            <person name="Ansorge W."/>
            <person name="Unseld M."/>
            <person name="Fartmann B."/>
            <person name="Valle G."/>
            <person name="Bloecker H."/>
            <person name="Perez-Alonso M."/>
            <person name="Obermaier B."/>
            <person name="Delseny M."/>
            <person name="Boutry M."/>
            <person name="Grivell L.A."/>
            <person name="Mache R."/>
            <person name="Puigdomenech P."/>
            <person name="De Simone V."/>
            <person name="Choisne N."/>
            <person name="Artiguenave F."/>
            <person name="Robert C."/>
            <person name="Brottier P."/>
            <person name="Wincker P."/>
            <person name="Cattolico L."/>
            <person name="Weissenbach J."/>
            <person name="Saurin W."/>
            <person name="Quetier F."/>
            <person name="Schaefer M."/>
            <person name="Mueller-Auer S."/>
            <person name="Gabel C."/>
            <person name="Fuchs M."/>
            <person name="Benes V."/>
            <person name="Wurmbach E."/>
            <person name="Drzonek H."/>
            <person name="Erfle H."/>
            <person name="Jordan N."/>
            <person name="Bangert S."/>
            <person name="Wiedelmann R."/>
            <person name="Kranz H."/>
            <person name="Voss H."/>
            <person name="Holland R."/>
            <person name="Brandt P."/>
            <person name="Nyakatura G."/>
            <person name="Vezzi A."/>
            <person name="D'Angelo M."/>
            <person name="Pallavicini A."/>
            <person name="Toppo S."/>
            <person name="Simionati B."/>
            <person name="Conrad A."/>
            <person name="Hornischer K."/>
            <person name="Kauer G."/>
            <person name="Loehnert T.-H."/>
            <person name="Nordsiek G."/>
            <person name="Reichelt J."/>
            <person name="Scharfe M."/>
            <person name="Schoen O."/>
            <person name="Bargues M."/>
            <person name="Terol J."/>
            <person name="Climent J."/>
            <person name="Navarro P."/>
            <person name="Collado C."/>
            <person name="Perez-Perez A."/>
            <person name="Ottenwaelder B."/>
            <person name="Duchemin D."/>
            <person name="Cooke R."/>
            <person name="Laudie M."/>
            <person name="Berger-Llauro C."/>
            <person name="Purnelle B."/>
            <person name="Masuy D."/>
            <person name="de Haan M."/>
            <person name="Maarse A.C."/>
            <person name="Alcaraz J.-P."/>
            <person name="Cottet A."/>
            <person name="Casacuberta E."/>
            <person name="Monfort A."/>
            <person name="Argiriou A."/>
            <person name="Flores M."/>
            <person name="Liguori R."/>
            <person name="Vitale D."/>
            <person name="Mannhaupt G."/>
            <person name="Haase D."/>
            <person name="Schoof H."/>
            <person name="Rudd S."/>
            <person name="Zaccaria P."/>
            <person name="Mewes H.-W."/>
            <person name="Mayer K.F.X."/>
            <person name="Kaul S."/>
            <person name="Town C.D."/>
            <person name="Koo H.L."/>
            <person name="Tallon L.J."/>
            <person name="Jenkins J."/>
            <person name="Rooney T."/>
            <person name="Rizzo M."/>
            <person name="Walts A."/>
            <person name="Utterback T."/>
            <person name="Fujii C.Y."/>
            <person name="Shea T.P."/>
            <person name="Creasy T.H."/>
            <person name="Haas B."/>
            <person name="Maiti R."/>
            <person name="Wu D."/>
            <person name="Peterson J."/>
            <person name="Van Aken S."/>
            <person name="Pai G."/>
            <person name="Militscher J."/>
            <person name="Sellers P."/>
            <person name="Gill J.E."/>
            <person name="Feldblyum T.V."/>
            <person name="Preuss D."/>
            <person name="Lin X."/>
            <person name="Nierman W.C."/>
            <person name="Salzberg S.L."/>
            <person name="White O."/>
            <person name="Venter J.C."/>
            <person name="Fraser C.M."/>
            <person name="Kaneko T."/>
            <person name="Nakamura Y."/>
            <person name="Sato S."/>
            <person name="Kato T."/>
            <person name="Asamizu E."/>
            <person name="Sasamoto S."/>
            <person name="Kimura T."/>
            <person name="Idesawa K."/>
            <person name="Kawashima K."/>
            <person name="Kishida Y."/>
            <person name="Kiyokawa C."/>
            <person name="Kohara M."/>
            <person name="Matsumoto M."/>
            <person name="Matsuno A."/>
            <person name="Muraki A."/>
            <person name="Nakayama S."/>
            <person name="Nakazaki N."/>
            <person name="Shinpo S."/>
            <person name="Takeuchi C."/>
            <person name="Wada T."/>
            <person name="Watanabe A."/>
            <person name="Yamada M."/>
            <person name="Yasuda M."/>
            <person name="Tabata S."/>
        </authorList>
    </citation>
    <scope>NUCLEOTIDE SEQUENCE [LARGE SCALE GENOMIC DNA]</scope>
    <source>
        <strain>cv. Columbia</strain>
    </source>
</reference>
<reference key="2">
    <citation type="journal article" date="2017" name="Plant J.">
        <title>Araport11: a complete reannotation of the Arabidopsis thaliana reference genome.</title>
        <authorList>
            <person name="Cheng C.Y."/>
            <person name="Krishnakumar V."/>
            <person name="Chan A.P."/>
            <person name="Thibaud-Nissen F."/>
            <person name="Schobel S."/>
            <person name="Town C.D."/>
        </authorList>
    </citation>
    <scope>GENOME REANNOTATION</scope>
    <source>
        <strain>cv. Columbia</strain>
    </source>
</reference>
<reference key="3">
    <citation type="journal article" date="2009" name="DNA Res.">
        <title>Analysis of multiple occurrences of alternative splicing events in Arabidopsis thaliana using novel sequenced full-length cDNAs.</title>
        <authorList>
            <person name="Iida K."/>
            <person name="Fukami-Kobayashi K."/>
            <person name="Toyoda A."/>
            <person name="Sakaki Y."/>
            <person name="Kobayashi M."/>
            <person name="Seki M."/>
            <person name="Shinozaki K."/>
        </authorList>
    </citation>
    <scope>NUCLEOTIDE SEQUENCE [LARGE SCALE MRNA] OF 1-232</scope>
    <source>
        <strain>cv. Columbia</strain>
        <tissue>Rosette leaf</tissue>
    </source>
</reference>
<organism>
    <name type="scientific">Arabidopsis thaliana</name>
    <name type="common">Mouse-ear cress</name>
    <dbReference type="NCBI Taxonomy" id="3702"/>
    <lineage>
        <taxon>Eukaryota</taxon>
        <taxon>Viridiplantae</taxon>
        <taxon>Streptophyta</taxon>
        <taxon>Embryophyta</taxon>
        <taxon>Tracheophyta</taxon>
        <taxon>Spermatophyta</taxon>
        <taxon>Magnoliopsida</taxon>
        <taxon>eudicotyledons</taxon>
        <taxon>Gunneridae</taxon>
        <taxon>Pentapetalae</taxon>
        <taxon>rosids</taxon>
        <taxon>malvids</taxon>
        <taxon>Brassicales</taxon>
        <taxon>Brassicaceae</taxon>
        <taxon>Camelineae</taxon>
        <taxon>Arabidopsis</taxon>
    </lineage>
</organism>
<proteinExistence type="evidence at transcript level"/>
<evidence type="ECO:0000255" key="1">
    <source>
        <dbReference type="PROSITE-ProRule" id="PRU00080"/>
    </source>
</evidence>
<evidence type="ECO:0000305" key="2"/>
<sequence length="594" mass="67982">MDRISNLPNEIICHIVSFLSAKEAAFASILSKRWRNLFTIVIKLQFDDSVKNEGSLKDFVDGVLALPTSSRVRSCSLECRREFDPTHYDDFNRCICALLKRGILDLKLDICAGRRYSLPLEVFTCKTLVKLELGSDFGGFVVDLVPEDAFLPALETLLLNYIRFKDLRRCAFEKLLSACLVLKELVIHNMEWERWKWSGNISSPTLERLTISHVDLYECEFTRINLDTPNLTYLELSDAVPDDYPIVNLDSLVEVKLDLTLMVDHKYHGYVDDNDTISSNPTNLINGLRNVEIMNLQSPNTFQAFSYFHEAIPVFKNLYHLTITNNDTVIGFCWEFLPFVIKKCPNLKTLVIDGPLHYNEDRPKSVCHCLSGYSFLLSCPLEVLQITDYSGTPGEVEQLKHFLEKLSGLKLVKLHSLTRFGSDKKKLLMLPRASSKCKIKHYDSLENALLPSLKTLILDSVKFYDRCGCCAFQKLLSACPVLVESVMRNLEWEDWEWSGCASSQTLERLTIDHRYWAEHNLESFTFDTPSLTYLDYNAHVPGSYPTVNLDSLVEAKLNLGFTTDLVEDDDDPFTSDPTNLIKGLRNVEILRLWM</sequence>
<feature type="chain" id="PRO_0000274955" description="F-box/LRR-repeat protein At3g58980">
    <location>
        <begin position="1"/>
        <end position="594"/>
    </location>
</feature>
<feature type="domain" description="F-box" evidence="1">
    <location>
        <begin position="1"/>
        <end position="49"/>
    </location>
</feature>
<feature type="repeat" description="LRR 1">
    <location>
        <begin position="103"/>
        <end position="125"/>
    </location>
</feature>
<feature type="repeat" description="LRR 2">
    <location>
        <begin position="128"/>
        <end position="151"/>
    </location>
</feature>
<feature type="repeat" description="LRR 3">
    <location>
        <begin position="152"/>
        <end position="174"/>
    </location>
</feature>
<feature type="repeat" description="LRR 4">
    <location>
        <begin position="203"/>
        <end position="218"/>
    </location>
</feature>
<feature type="repeat" description="LRR 5">
    <location>
        <begin position="219"/>
        <end position="242"/>
    </location>
</feature>
<feature type="repeat" description="LRR 6">
    <location>
        <begin position="249"/>
        <end position="272"/>
    </location>
</feature>
<feature type="repeat" description="LRR 7">
    <location>
        <begin position="288"/>
        <end position="314"/>
    </location>
</feature>
<feature type="repeat" description="LRR 8">
    <location>
        <begin position="315"/>
        <end position="339"/>
    </location>
</feature>
<feature type="repeat" description="LRR 9">
    <location>
        <begin position="344"/>
        <end position="369"/>
    </location>
</feature>
<feature type="repeat" description="LRR 10">
    <location>
        <begin position="403"/>
        <end position="414"/>
    </location>
</feature>
<feature type="repeat" description="LRR 11">
    <location>
        <begin position="415"/>
        <end position="437"/>
    </location>
</feature>
<feature type="repeat" description="LRR 12">
    <location>
        <begin position="450"/>
        <end position="474"/>
    </location>
</feature>
<feature type="repeat" description="LRR 13">
    <location>
        <begin position="503"/>
        <end position="518"/>
    </location>
</feature>
<feature type="repeat" description="LRR 14">
    <location>
        <begin position="519"/>
        <end position="541"/>
    </location>
</feature>
<feature type="repeat" description="LRR 15">
    <location>
        <begin position="584"/>
        <end position="594"/>
    </location>
</feature>
<name>FBL26_ARATH</name>
<protein>
    <recommendedName>
        <fullName>F-box/LRR-repeat protein At3g58980</fullName>
    </recommendedName>
</protein>